<evidence type="ECO:0000255" key="1">
    <source>
        <dbReference type="HAMAP-Rule" id="MF_00592"/>
    </source>
</evidence>
<gene>
    <name evidence="1" type="primary">deoC</name>
    <name type="ordered locus">SeHA_C4975</name>
</gene>
<comment type="function">
    <text evidence="1">Catalyzes a reversible aldol reaction between acetaldehyde and D-glyceraldehyde 3-phosphate to generate 2-deoxy-D-ribose 5-phosphate.</text>
</comment>
<comment type="catalytic activity">
    <reaction evidence="1">
        <text>2-deoxy-D-ribose 5-phosphate = D-glyceraldehyde 3-phosphate + acetaldehyde</text>
        <dbReference type="Rhea" id="RHEA:12821"/>
        <dbReference type="ChEBI" id="CHEBI:15343"/>
        <dbReference type="ChEBI" id="CHEBI:59776"/>
        <dbReference type="ChEBI" id="CHEBI:62877"/>
        <dbReference type="EC" id="4.1.2.4"/>
    </reaction>
</comment>
<comment type="pathway">
    <text evidence="1">Carbohydrate degradation; 2-deoxy-D-ribose 1-phosphate degradation; D-glyceraldehyde 3-phosphate and acetaldehyde from 2-deoxy-alpha-D-ribose 1-phosphate: step 2/2.</text>
</comment>
<comment type="subcellular location">
    <subcellularLocation>
        <location evidence="1">Cytoplasm</location>
    </subcellularLocation>
</comment>
<comment type="similarity">
    <text evidence="1">Belongs to the DeoC/FbaB aldolase family. DeoC type 2 subfamily.</text>
</comment>
<proteinExistence type="inferred from homology"/>
<sequence length="259" mass="27685">MTDLKASSLRALKLMDLTTLNDDDTNEKVIALCHQAKTPVGNTAAICIYPRFIPIARKTLKEQGTPDIRIATVTNFPHGNDDIDIALAETRAAIAYGADEVDVVFPYRALIAGNEQVGFDLVKACKDACAAANVLLKVIIETGELKEEALIRKASEISIKAGADFIKTSTGKVPVNATPESARIMMEVIRDMGVSKTVGFKPAGGVRTAEDAQKFLAIADELFGADWADSRHYRFGASSLLASLLKALGHGDGKSASSY</sequence>
<name>DEOC_SALHS</name>
<accession>B4TGZ9</accession>
<protein>
    <recommendedName>
        <fullName evidence="1">Deoxyribose-phosphate aldolase</fullName>
        <shortName evidence="1">DERA</shortName>
        <ecNumber evidence="1">4.1.2.4</ecNumber>
    </recommendedName>
    <alternativeName>
        <fullName evidence="1">2-deoxy-D-ribose 5-phosphate aldolase</fullName>
    </alternativeName>
    <alternativeName>
        <fullName evidence="1">Phosphodeoxyriboaldolase</fullName>
        <shortName evidence="1">Deoxyriboaldolase</shortName>
    </alternativeName>
</protein>
<dbReference type="EC" id="4.1.2.4" evidence="1"/>
<dbReference type="EMBL" id="CP001120">
    <property type="protein sequence ID" value="ACF67057.1"/>
    <property type="molecule type" value="Genomic_DNA"/>
</dbReference>
<dbReference type="RefSeq" id="WP_001519713.1">
    <property type="nucleotide sequence ID" value="NC_011083.1"/>
</dbReference>
<dbReference type="SMR" id="B4TGZ9"/>
<dbReference type="KEGG" id="seh:SeHA_C4975"/>
<dbReference type="HOGENOM" id="CLU_053595_3_1_6"/>
<dbReference type="UniPathway" id="UPA00002">
    <property type="reaction ID" value="UER00468"/>
</dbReference>
<dbReference type="Proteomes" id="UP000001866">
    <property type="component" value="Chromosome"/>
</dbReference>
<dbReference type="GO" id="GO:0005737">
    <property type="term" value="C:cytoplasm"/>
    <property type="evidence" value="ECO:0007669"/>
    <property type="project" value="UniProtKB-SubCell"/>
</dbReference>
<dbReference type="GO" id="GO:0004139">
    <property type="term" value="F:deoxyribose-phosphate aldolase activity"/>
    <property type="evidence" value="ECO:0007669"/>
    <property type="project" value="UniProtKB-UniRule"/>
</dbReference>
<dbReference type="GO" id="GO:0006018">
    <property type="term" value="P:2-deoxyribose 1-phosphate catabolic process"/>
    <property type="evidence" value="ECO:0007669"/>
    <property type="project" value="UniProtKB-UniRule"/>
</dbReference>
<dbReference type="GO" id="GO:0016052">
    <property type="term" value="P:carbohydrate catabolic process"/>
    <property type="evidence" value="ECO:0007669"/>
    <property type="project" value="TreeGrafter"/>
</dbReference>
<dbReference type="GO" id="GO:0009264">
    <property type="term" value="P:deoxyribonucleotide catabolic process"/>
    <property type="evidence" value="ECO:0007669"/>
    <property type="project" value="InterPro"/>
</dbReference>
<dbReference type="CDD" id="cd00959">
    <property type="entry name" value="DeoC"/>
    <property type="match status" value="1"/>
</dbReference>
<dbReference type="FunFam" id="3.20.20.70:FF:000034">
    <property type="entry name" value="Deoxyribose-phosphate aldolase"/>
    <property type="match status" value="1"/>
</dbReference>
<dbReference type="Gene3D" id="3.20.20.70">
    <property type="entry name" value="Aldolase class I"/>
    <property type="match status" value="1"/>
</dbReference>
<dbReference type="HAMAP" id="MF_00592">
    <property type="entry name" value="DeoC_type2"/>
    <property type="match status" value="1"/>
</dbReference>
<dbReference type="InterPro" id="IPR013785">
    <property type="entry name" value="Aldolase_TIM"/>
</dbReference>
<dbReference type="InterPro" id="IPR011343">
    <property type="entry name" value="DeoC"/>
</dbReference>
<dbReference type="InterPro" id="IPR002915">
    <property type="entry name" value="DeoC/FbaB/LacD_aldolase"/>
</dbReference>
<dbReference type="InterPro" id="IPR023649">
    <property type="entry name" value="DeoC_typeII"/>
</dbReference>
<dbReference type="NCBIfam" id="TIGR00126">
    <property type="entry name" value="deoC"/>
    <property type="match status" value="1"/>
</dbReference>
<dbReference type="PANTHER" id="PTHR10889">
    <property type="entry name" value="DEOXYRIBOSE-PHOSPHATE ALDOLASE"/>
    <property type="match status" value="1"/>
</dbReference>
<dbReference type="PANTHER" id="PTHR10889:SF3">
    <property type="entry name" value="DEOXYRIBOSE-PHOSPHATE ALDOLASE"/>
    <property type="match status" value="1"/>
</dbReference>
<dbReference type="Pfam" id="PF01791">
    <property type="entry name" value="DeoC"/>
    <property type="match status" value="1"/>
</dbReference>
<dbReference type="PIRSF" id="PIRSF001357">
    <property type="entry name" value="DeoC"/>
    <property type="match status" value="1"/>
</dbReference>
<dbReference type="SMART" id="SM01133">
    <property type="entry name" value="DeoC"/>
    <property type="match status" value="1"/>
</dbReference>
<dbReference type="SUPFAM" id="SSF51569">
    <property type="entry name" value="Aldolase"/>
    <property type="match status" value="1"/>
</dbReference>
<keyword id="KW-0963">Cytoplasm</keyword>
<keyword id="KW-0456">Lyase</keyword>
<keyword id="KW-0704">Schiff base</keyword>
<organism>
    <name type="scientific">Salmonella heidelberg (strain SL476)</name>
    <dbReference type="NCBI Taxonomy" id="454169"/>
    <lineage>
        <taxon>Bacteria</taxon>
        <taxon>Pseudomonadati</taxon>
        <taxon>Pseudomonadota</taxon>
        <taxon>Gammaproteobacteria</taxon>
        <taxon>Enterobacterales</taxon>
        <taxon>Enterobacteriaceae</taxon>
        <taxon>Salmonella</taxon>
    </lineage>
</organism>
<reference key="1">
    <citation type="journal article" date="2011" name="J. Bacteriol.">
        <title>Comparative genomics of 28 Salmonella enterica isolates: evidence for CRISPR-mediated adaptive sublineage evolution.</title>
        <authorList>
            <person name="Fricke W.F."/>
            <person name="Mammel M.K."/>
            <person name="McDermott P.F."/>
            <person name="Tartera C."/>
            <person name="White D.G."/>
            <person name="Leclerc J.E."/>
            <person name="Ravel J."/>
            <person name="Cebula T.A."/>
        </authorList>
    </citation>
    <scope>NUCLEOTIDE SEQUENCE [LARGE SCALE GENOMIC DNA]</scope>
    <source>
        <strain>SL476</strain>
    </source>
</reference>
<feature type="chain" id="PRO_1000129812" description="Deoxyribose-phosphate aldolase">
    <location>
        <begin position="1"/>
        <end position="259"/>
    </location>
</feature>
<feature type="active site" description="Proton donor/acceptor" evidence="1">
    <location>
        <position position="102"/>
    </location>
</feature>
<feature type="active site" description="Schiff-base intermediate with acetaldehyde" evidence="1">
    <location>
        <position position="167"/>
    </location>
</feature>
<feature type="active site" description="Proton donor/acceptor" evidence="1">
    <location>
        <position position="201"/>
    </location>
</feature>